<feature type="chain" id="PRO_0000379903" description="Acyl-CoA-binding domain-containing protein 4">
    <location>
        <begin position="1"/>
        <end position="668"/>
    </location>
</feature>
<feature type="domain" description="ACB" evidence="3">
    <location>
        <begin position="12"/>
        <end position="106"/>
    </location>
</feature>
<feature type="repeat" description="Kelch 1">
    <location>
        <begin position="195"/>
        <end position="242"/>
    </location>
</feature>
<feature type="repeat" description="Kelch 2">
    <location>
        <begin position="255"/>
        <end position="305"/>
    </location>
</feature>
<feature type="repeat" description="Kelch 3">
    <location>
        <begin position="307"/>
        <end position="356"/>
    </location>
</feature>
<feature type="repeat" description="Kelch 4">
    <location>
        <begin position="358"/>
        <end position="407"/>
    </location>
</feature>
<feature type="repeat" description="Kelch 5">
    <location>
        <begin position="408"/>
        <end position="456"/>
    </location>
</feature>
<feature type="repeat" description="Kelch 6">
    <location>
        <begin position="463"/>
        <end position="508"/>
    </location>
</feature>
<feature type="region of interest" description="Disordered" evidence="4">
    <location>
        <begin position="639"/>
        <end position="668"/>
    </location>
</feature>
<feature type="coiled-coil region" evidence="2">
    <location>
        <begin position="538"/>
        <end position="647"/>
    </location>
</feature>
<feature type="binding site" evidence="1">
    <location>
        <position position="33"/>
    </location>
    <ligand>
        <name>an acyl-CoA</name>
        <dbReference type="ChEBI" id="CHEBI:58342"/>
    </ligand>
</feature>
<feature type="binding site" evidence="8">
    <location>
        <begin position="48"/>
        <end position="52"/>
    </location>
    <ligand>
        <name>an acyl-CoA</name>
        <dbReference type="ChEBI" id="CHEBI:58342"/>
    </ligand>
</feature>
<feature type="binding site" evidence="1">
    <location>
        <position position="74"/>
    </location>
    <ligand>
        <name>an acyl-CoA</name>
        <dbReference type="ChEBI" id="CHEBI:58342"/>
    </ligand>
</feature>
<feature type="modified residue" description="Phosphoserine" evidence="9 10 11">
    <location>
        <position position="515"/>
    </location>
</feature>
<feature type="modified residue" description="Phosphoserine" evidence="9">
    <location>
        <position position="520"/>
    </location>
</feature>
<feature type="splice variant" id="VSP_037739" description="In isoform 2." evidence="8">
    <original>R</original>
    <variation>QR</variation>
    <location>
        <position position="123"/>
    </location>
</feature>
<feature type="mutagenesis site" description="Reduction of oleoyl-CoA-binding activity." evidence="5">
    <original>G</original>
    <variation>T</variation>
    <location>
        <position position="24"/>
    </location>
</feature>
<feature type="mutagenesis site" description="Reduction of oleoyl-CoA-binding activity." evidence="5">
    <original>L</original>
    <variation>T</variation>
    <location>
        <position position="25"/>
    </location>
</feature>
<feature type="mutagenesis site" description="Reduction of oleoyl-CoA-binding activity." evidence="5">
    <original>S</original>
    <variation>A</variation>
    <location>
        <position position="28"/>
    </location>
</feature>
<feature type="mutagenesis site" description="Reduction of oleoyl-CoA-binding activity." evidence="5">
    <original>L</original>
    <variation>Q</variation>
    <location>
        <position position="45"/>
    </location>
</feature>
<feature type="mutagenesis site" description="Reduction of oleoyl-CoA-binding activity." evidence="5">
    <original>Y</original>
    <variation>A</variation>
    <location>
        <position position="48"/>
    </location>
</feature>
<feature type="mutagenesis site" description="Reduction of oleoyl-CoA-binding activity." evidence="5">
    <original>Q</original>
    <variation>A</variation>
    <location>
        <position position="52"/>
    </location>
</feature>
<feature type="mutagenesis site" description="Reduction of oleoyl-CoA-binding activity." evidence="5">
    <original>K</original>
    <variation>A</variation>
    <location>
        <position position="74"/>
    </location>
</feature>
<feature type="mutagenesis site" description="Reduction of oleoyl-CoA-binding activity." evidence="5">
    <original>F</original>
    <variation>A</variation>
    <location>
        <position position="93"/>
    </location>
</feature>
<gene>
    <name type="primary">ACBP4</name>
    <name type="ordered locus">At3g05420</name>
    <name type="ORF">F22F7.13</name>
</gene>
<comment type="function">
    <text evidence="5 6">Binds medium- and long-chain acyl-CoA esters with very high affinity. Can interact in vitro with oleoyl-CoA, barely with palmitoyl-CoA, but not with arachidonyl-CoA. May function as an intracellular carrier of acyl-CoA esters. Plays a role in the biosynthesis of membrane lipids including galactolipids and phospholipids.</text>
</comment>
<comment type="subunit">
    <text evidence="7">Interacts with RAP2-3/EBP, an ethylene-responsive element binding protein.</text>
</comment>
<comment type="interaction">
    <interactant intactId="EBI-2009699">
        <id>Q9MA55</id>
    </interactant>
    <interactant intactId="EBI-4428122">
        <id>Q8RWD9</id>
        <label>ACBP5</label>
    </interactant>
    <organismsDiffer>false</organismsDiffer>
    <experiments>5</experiments>
</comment>
<comment type="interaction">
    <interactant intactId="EBI-2009699">
        <id>Q9MA55</id>
    </interactant>
    <interactant intactId="EBI-4442347">
        <id>Q93Z18</id>
        <label>CKL3</label>
    </interactant>
    <organismsDiffer>false</organismsDiffer>
    <experiments>3</experiments>
</comment>
<comment type="interaction">
    <interactant intactId="EBI-2009699">
        <id>Q9MA55</id>
    </interactant>
    <interactant intactId="EBI-25516910">
        <id>Q8LPI7</id>
        <label>CKL4</label>
    </interactant>
    <organismsDiffer>false</organismsDiffer>
    <experiments>3</experiments>
</comment>
<comment type="interaction">
    <interactant intactId="EBI-2009699">
        <id>Q9MA55</id>
    </interactant>
    <interactant intactId="EBI-368243">
        <id>P42736</id>
        <label>RAP2-3</label>
    </interactant>
    <organismsDiffer>false</organismsDiffer>
    <experiments>4</experiments>
</comment>
<comment type="subcellular location">
    <subcellularLocation>
        <location evidence="6 7">Cytoplasm</location>
    </subcellularLocation>
    <text>Also to the periphery of the nucleus.</text>
</comment>
<comment type="alternative products">
    <event type="alternative splicing"/>
    <isoform>
        <id>Q9MA55-1</id>
        <name>1</name>
        <sequence type="displayed"/>
    </isoform>
    <isoform>
        <id>Q9MA55-2</id>
        <name>2</name>
        <sequence type="described" ref="VSP_037739"/>
    </isoform>
</comment>
<comment type="tissue specificity">
    <text evidence="5 7">Mostly expressed in roots, stems, and leaves, and, to a lower extent, in flowers and siliques.</text>
</comment>
<comment type="induction">
    <text evidence="7">By 1-aminocyclopropane-1-carboxylic acid (ACC, ethylene precursor), methyl jasmonate (MeJA), and Botrytis cinerea. Up-regulated in the light and down-regulated in constant darkness.</text>
</comment>
<comment type="similarity">
    <text evidence="8">Belongs to the ACBP family.</text>
</comment>
<evidence type="ECO:0000250" key="1">
    <source>
        <dbReference type="UniProtKB" id="P07107"/>
    </source>
</evidence>
<evidence type="ECO:0000255" key="2"/>
<evidence type="ECO:0000255" key="3">
    <source>
        <dbReference type="PROSITE-ProRule" id="PRU00573"/>
    </source>
</evidence>
<evidence type="ECO:0000256" key="4">
    <source>
        <dbReference type="SAM" id="MobiDB-lite"/>
    </source>
</evidence>
<evidence type="ECO:0000269" key="5">
    <source>
    </source>
</evidence>
<evidence type="ECO:0000269" key="6">
    <source>
    </source>
</evidence>
<evidence type="ECO:0000269" key="7">
    <source>
    </source>
</evidence>
<evidence type="ECO:0000305" key="8"/>
<evidence type="ECO:0007744" key="9">
    <source>
    </source>
</evidence>
<evidence type="ECO:0007744" key="10">
    <source>
    </source>
</evidence>
<evidence type="ECO:0007744" key="11">
    <source>
    </source>
</evidence>
<accession>Q9MA55</accession>
<accession>Q3E7F2</accession>
<reference key="1">
    <citation type="journal article" date="2000" name="Nature">
        <title>Sequence and analysis of chromosome 3 of the plant Arabidopsis thaliana.</title>
        <authorList>
            <person name="Salanoubat M."/>
            <person name="Lemcke K."/>
            <person name="Rieger M."/>
            <person name="Ansorge W."/>
            <person name="Unseld M."/>
            <person name="Fartmann B."/>
            <person name="Valle G."/>
            <person name="Bloecker H."/>
            <person name="Perez-Alonso M."/>
            <person name="Obermaier B."/>
            <person name="Delseny M."/>
            <person name="Boutry M."/>
            <person name="Grivell L.A."/>
            <person name="Mache R."/>
            <person name="Puigdomenech P."/>
            <person name="De Simone V."/>
            <person name="Choisne N."/>
            <person name="Artiguenave F."/>
            <person name="Robert C."/>
            <person name="Brottier P."/>
            <person name="Wincker P."/>
            <person name="Cattolico L."/>
            <person name="Weissenbach J."/>
            <person name="Saurin W."/>
            <person name="Quetier F."/>
            <person name="Schaefer M."/>
            <person name="Mueller-Auer S."/>
            <person name="Gabel C."/>
            <person name="Fuchs M."/>
            <person name="Benes V."/>
            <person name="Wurmbach E."/>
            <person name="Drzonek H."/>
            <person name="Erfle H."/>
            <person name="Jordan N."/>
            <person name="Bangert S."/>
            <person name="Wiedelmann R."/>
            <person name="Kranz H."/>
            <person name="Voss H."/>
            <person name="Holland R."/>
            <person name="Brandt P."/>
            <person name="Nyakatura G."/>
            <person name="Vezzi A."/>
            <person name="D'Angelo M."/>
            <person name="Pallavicini A."/>
            <person name="Toppo S."/>
            <person name="Simionati B."/>
            <person name="Conrad A."/>
            <person name="Hornischer K."/>
            <person name="Kauer G."/>
            <person name="Loehnert T.-H."/>
            <person name="Nordsiek G."/>
            <person name="Reichelt J."/>
            <person name="Scharfe M."/>
            <person name="Schoen O."/>
            <person name="Bargues M."/>
            <person name="Terol J."/>
            <person name="Climent J."/>
            <person name="Navarro P."/>
            <person name="Collado C."/>
            <person name="Perez-Perez A."/>
            <person name="Ottenwaelder B."/>
            <person name="Duchemin D."/>
            <person name="Cooke R."/>
            <person name="Laudie M."/>
            <person name="Berger-Llauro C."/>
            <person name="Purnelle B."/>
            <person name="Masuy D."/>
            <person name="de Haan M."/>
            <person name="Maarse A.C."/>
            <person name="Alcaraz J.-P."/>
            <person name="Cottet A."/>
            <person name="Casacuberta E."/>
            <person name="Monfort A."/>
            <person name="Argiriou A."/>
            <person name="Flores M."/>
            <person name="Liguori R."/>
            <person name="Vitale D."/>
            <person name="Mannhaupt G."/>
            <person name="Haase D."/>
            <person name="Schoof H."/>
            <person name="Rudd S."/>
            <person name="Zaccaria P."/>
            <person name="Mewes H.-W."/>
            <person name="Mayer K.F.X."/>
            <person name="Kaul S."/>
            <person name="Town C.D."/>
            <person name="Koo H.L."/>
            <person name="Tallon L.J."/>
            <person name="Jenkins J."/>
            <person name="Rooney T."/>
            <person name="Rizzo M."/>
            <person name="Walts A."/>
            <person name="Utterback T."/>
            <person name="Fujii C.Y."/>
            <person name="Shea T.P."/>
            <person name="Creasy T.H."/>
            <person name="Haas B."/>
            <person name="Maiti R."/>
            <person name="Wu D."/>
            <person name="Peterson J."/>
            <person name="Van Aken S."/>
            <person name="Pai G."/>
            <person name="Militscher J."/>
            <person name="Sellers P."/>
            <person name="Gill J.E."/>
            <person name="Feldblyum T.V."/>
            <person name="Preuss D."/>
            <person name="Lin X."/>
            <person name="Nierman W.C."/>
            <person name="Salzberg S.L."/>
            <person name="White O."/>
            <person name="Venter J.C."/>
            <person name="Fraser C.M."/>
            <person name="Kaneko T."/>
            <person name="Nakamura Y."/>
            <person name="Sato S."/>
            <person name="Kato T."/>
            <person name="Asamizu E."/>
            <person name="Sasamoto S."/>
            <person name="Kimura T."/>
            <person name="Idesawa K."/>
            <person name="Kawashima K."/>
            <person name="Kishida Y."/>
            <person name="Kiyokawa C."/>
            <person name="Kohara M."/>
            <person name="Matsumoto M."/>
            <person name="Matsuno A."/>
            <person name="Muraki A."/>
            <person name="Nakayama S."/>
            <person name="Nakazaki N."/>
            <person name="Shinpo S."/>
            <person name="Takeuchi C."/>
            <person name="Wada T."/>
            <person name="Watanabe A."/>
            <person name="Yamada M."/>
            <person name="Yasuda M."/>
            <person name="Tabata S."/>
        </authorList>
    </citation>
    <scope>NUCLEOTIDE SEQUENCE [LARGE SCALE GENOMIC DNA]</scope>
    <source>
        <strain>cv. Columbia</strain>
    </source>
</reference>
<reference key="2">
    <citation type="journal article" date="2017" name="Plant J.">
        <title>Araport11: a complete reannotation of the Arabidopsis thaliana reference genome.</title>
        <authorList>
            <person name="Cheng C.Y."/>
            <person name="Krishnakumar V."/>
            <person name="Chan A.P."/>
            <person name="Thibaud-Nissen F."/>
            <person name="Schobel S."/>
            <person name="Town C.D."/>
        </authorList>
    </citation>
    <scope>GENOME REANNOTATION</scope>
    <source>
        <strain>cv. Columbia</strain>
    </source>
</reference>
<reference key="3">
    <citation type="journal article" date="2003" name="Science">
        <title>Empirical analysis of transcriptional activity in the Arabidopsis genome.</title>
        <authorList>
            <person name="Yamada K."/>
            <person name="Lim J."/>
            <person name="Dale J.M."/>
            <person name="Chen H."/>
            <person name="Shinn P."/>
            <person name="Palm C.J."/>
            <person name="Southwick A.M."/>
            <person name="Wu H.C."/>
            <person name="Kim C.J."/>
            <person name="Nguyen M."/>
            <person name="Pham P.K."/>
            <person name="Cheuk R.F."/>
            <person name="Karlin-Newmann G."/>
            <person name="Liu S.X."/>
            <person name="Lam B."/>
            <person name="Sakano H."/>
            <person name="Wu T."/>
            <person name="Yu G."/>
            <person name="Miranda M."/>
            <person name="Quach H.L."/>
            <person name="Tripp M."/>
            <person name="Chang C.H."/>
            <person name="Lee J.M."/>
            <person name="Toriumi M.J."/>
            <person name="Chan M.M."/>
            <person name="Tang C.C."/>
            <person name="Onodera C.S."/>
            <person name="Deng J.M."/>
            <person name="Akiyama K."/>
            <person name="Ansari Y."/>
            <person name="Arakawa T."/>
            <person name="Banh J."/>
            <person name="Banno F."/>
            <person name="Bowser L."/>
            <person name="Brooks S.Y."/>
            <person name="Carninci P."/>
            <person name="Chao Q."/>
            <person name="Choy N."/>
            <person name="Enju A."/>
            <person name="Goldsmith A.D."/>
            <person name="Gurjal M."/>
            <person name="Hansen N.F."/>
            <person name="Hayashizaki Y."/>
            <person name="Johnson-Hopson C."/>
            <person name="Hsuan V.W."/>
            <person name="Iida K."/>
            <person name="Karnes M."/>
            <person name="Khan S."/>
            <person name="Koesema E."/>
            <person name="Ishida J."/>
            <person name="Jiang P.X."/>
            <person name="Jones T."/>
            <person name="Kawai J."/>
            <person name="Kamiya A."/>
            <person name="Meyers C."/>
            <person name="Nakajima M."/>
            <person name="Narusaka M."/>
            <person name="Seki M."/>
            <person name="Sakurai T."/>
            <person name="Satou M."/>
            <person name="Tamse R."/>
            <person name="Vaysberg M."/>
            <person name="Wallender E.K."/>
            <person name="Wong C."/>
            <person name="Yamamura Y."/>
            <person name="Yuan S."/>
            <person name="Shinozaki K."/>
            <person name="Davis R.W."/>
            <person name="Theologis A."/>
            <person name="Ecker J.R."/>
        </authorList>
    </citation>
    <scope>NUCLEOTIDE SEQUENCE [LARGE SCALE MRNA] (ISOFORM 1)</scope>
    <source>
        <strain>cv. Columbia</strain>
    </source>
</reference>
<reference key="4">
    <citation type="submission" date="2006-07" db="EMBL/GenBank/DDBJ databases">
        <title>Large-scale analysis of RIKEN Arabidopsis full-length (RAFL) cDNAs.</title>
        <authorList>
            <person name="Totoki Y."/>
            <person name="Seki M."/>
            <person name="Ishida J."/>
            <person name="Nakajima M."/>
            <person name="Enju A."/>
            <person name="Kamiya A."/>
            <person name="Narusaka M."/>
            <person name="Shin-i T."/>
            <person name="Nakagawa M."/>
            <person name="Sakamoto N."/>
            <person name="Oishi K."/>
            <person name="Kohara Y."/>
            <person name="Kobayashi M."/>
            <person name="Toyoda A."/>
            <person name="Sakaki Y."/>
            <person name="Sakurai T."/>
            <person name="Iida K."/>
            <person name="Akiyama K."/>
            <person name="Satou M."/>
            <person name="Toyoda T."/>
            <person name="Konagaya A."/>
            <person name="Carninci P."/>
            <person name="Kawai J."/>
            <person name="Hayashizaki Y."/>
            <person name="Shinozaki K."/>
        </authorList>
    </citation>
    <scope>NUCLEOTIDE SEQUENCE [LARGE SCALE MRNA] (ISOFORM 1)</scope>
    <source>
        <strain>cv. Columbia</strain>
    </source>
</reference>
<reference key="5">
    <citation type="journal article" date="2004" name="Plant Mol. Biol.">
        <title>ACBP4 and ACBP5, novel Arabidopsis acyl-CoA-binding proteins with kelch motifs that bind oleoyl-CoA.</title>
        <authorList>
            <person name="Leung K.-C."/>
            <person name="Li H.-Y."/>
            <person name="Mishra G."/>
            <person name="Chye M.-L."/>
        </authorList>
    </citation>
    <scope>FUNCTION</scope>
    <scope>MUTAGENESIS OF GLY-24; LEU-25; SER-28; LEU-45; TYR-48; GLN-52; LYS-74 AND PHE-93</scope>
    <scope>TISSUE SPECIFICITY</scope>
</reference>
<reference key="6">
    <citation type="journal article" date="2008" name="J. Exp. Bot.">
        <title>Ethylene- and pathogen-inducible Arabidopsis acyl-CoA-binding protein 4 interacts with an ethylene-responsive element binding protein.</title>
        <authorList>
            <person name="Li H.-Y."/>
            <person name="Xiao S."/>
            <person name="Chye M.-L."/>
        </authorList>
    </citation>
    <scope>SUBCELLULAR LOCATION</scope>
    <scope>INDUCTION BY ETHYLENE; JASMONATE AND BOTRYTIS CINEREA</scope>
    <scope>TISSUE SPECIFICITY</scope>
    <scope>INTERACTION WITH EBP</scope>
</reference>
<reference key="7">
    <citation type="journal article" date="2008" name="J. Proteome Res.">
        <title>Site-specific phosphorylation profiling of Arabidopsis proteins by mass spectrometry and peptide chip analysis.</title>
        <authorList>
            <person name="de la Fuente van Bentem S."/>
            <person name="Anrather D."/>
            <person name="Dohnal I."/>
            <person name="Roitinger E."/>
            <person name="Csaszar E."/>
            <person name="Joore J."/>
            <person name="Buijnink J."/>
            <person name="Carreri A."/>
            <person name="Forzani C."/>
            <person name="Lorkovic Z.J."/>
            <person name="Barta A."/>
            <person name="Lecourieux D."/>
            <person name="Verhounig A."/>
            <person name="Jonak C."/>
            <person name="Hirt H."/>
        </authorList>
    </citation>
    <scope>PHOSPHORYLATION [LARGE SCALE ANALYSIS] AT SER-515 AND SER-520</scope>
    <scope>IDENTIFICATION BY MASS SPECTROMETRY [LARGE SCALE ANALYSIS]</scope>
    <source>
        <tissue>Root</tissue>
    </source>
</reference>
<reference key="8">
    <citation type="journal article" date="2008" name="Plant Mol. Biol.">
        <title>Arabidopsis acyl-CoA-binding proteins ACBP4 and ACBP5 are subcellularly localized to the cytosol and ACBP4 depletion affects membrane lipid composition.</title>
        <authorList>
            <person name="Xiao S."/>
            <person name="Li H.-Y."/>
            <person name="Zhang J.-P."/>
            <person name="Chan S.-W."/>
            <person name="Chye M.-L."/>
        </authorList>
    </citation>
    <scope>FUNCTION</scope>
    <scope>SUBCELLULAR LOCATION</scope>
</reference>
<reference key="9">
    <citation type="journal article" date="2009" name="J. Proteomics">
        <title>Phosphoproteomic analysis of nuclei-enriched fractions from Arabidopsis thaliana.</title>
        <authorList>
            <person name="Jones A.M.E."/>
            <person name="MacLean D."/>
            <person name="Studholme D.J."/>
            <person name="Serna-Sanz A."/>
            <person name="Andreasson E."/>
            <person name="Rathjen J.P."/>
            <person name="Peck S.C."/>
        </authorList>
    </citation>
    <scope>PHOSPHORYLATION [LARGE SCALE ANALYSIS] AT SER-515</scope>
    <scope>IDENTIFICATION BY MASS SPECTROMETRY [LARGE SCALE ANALYSIS]</scope>
    <source>
        <strain>cv. Columbia</strain>
    </source>
</reference>
<reference key="10">
    <citation type="journal article" date="2009" name="Plant Physiol.">
        <title>Large-scale Arabidopsis phosphoproteome profiling reveals novel chloroplast kinase substrates and phosphorylation networks.</title>
        <authorList>
            <person name="Reiland S."/>
            <person name="Messerli G."/>
            <person name="Baerenfaller K."/>
            <person name="Gerrits B."/>
            <person name="Endler A."/>
            <person name="Grossmann J."/>
            <person name="Gruissem W."/>
            <person name="Baginsky S."/>
        </authorList>
    </citation>
    <scope>PHOSPHORYLATION [LARGE SCALE ANALYSIS] AT SER-515</scope>
    <scope>IDENTIFICATION BY MASS SPECTROMETRY [LARGE SCALE ANALYSIS]</scope>
</reference>
<reference key="11">
    <citation type="journal article" date="2009" name="Plant Physiol. Biochem.">
        <title>An Arabidopsis family of six acyl-CoA-binding proteins has three cytosolic members.</title>
        <authorList>
            <person name="Xiao S."/>
            <person name="Chye M.-L."/>
        </authorList>
    </citation>
    <scope>GENE FAMILY</scope>
    <scope>NOMENCLATURE</scope>
</reference>
<protein>
    <recommendedName>
        <fullName>Acyl-CoA-binding domain-containing protein 4</fullName>
        <shortName>Acyl-CoA binding protein 4</shortName>
    </recommendedName>
</protein>
<proteinExistence type="evidence at protein level"/>
<name>ACBP4_ARATH</name>
<sequence length="668" mass="73075">MAMPRATSGPAYPERFYAAASYVGLDGSDSSAKNVISKFPDDTALLLYALYQQATVGPCNTPKPSAWRPVEQSKWKSWQGLGTMPSIEAMRLFVKILEEDDPGWYSRASNDIPDPVVDVQINRAKDEPVVENGSTFSETKTISTENGRLAETQDKDVVSEDSNTVSVYNQWTAPQTSGQRPKARYEHGAAVIQDKMYIYGGNHNGRYLGDLHVLDLKSWTWSRVETKVATESQETSTPTLLAPCAGHSLIAWDNKLLSIGGHTKDPSESMQVKVFDPHTITWSMLKTYGKPPVSRGGQSVTMVGKTLVIFGGQDAKRSLLNDLHILDLDTMTWDEIDAVGVSPSPRSDHAAAVHAERFLLIFGGGSHATCFDDLHVLDLQTMEWSRPAQQGDAPTPRAGHAGVTIGENWFIVGGGDNKSGASESVVLNMSTLAWSVVASVQGRVPLASEGLSLVVSSYNGEDVLVAFGGYNGRYNNEINLLKPSHKSTLQTKTLEAPLPGSLSAVNNATTRDIESEVEVSQEGRVREIVMDNVNPGSKVEGNSERIIATIKSEKEELEASLNKERMQTLQLRQELGEAELRNTDLYKELQSVRGQLAAEQSRCFKLEVDVAELRQKLQTLETLQKELELLQRQKAASEQAAMNAKRQGSGGVWGWLAGSPQEKDDDSP</sequence>
<organism>
    <name type="scientific">Arabidopsis thaliana</name>
    <name type="common">Mouse-ear cress</name>
    <dbReference type="NCBI Taxonomy" id="3702"/>
    <lineage>
        <taxon>Eukaryota</taxon>
        <taxon>Viridiplantae</taxon>
        <taxon>Streptophyta</taxon>
        <taxon>Embryophyta</taxon>
        <taxon>Tracheophyta</taxon>
        <taxon>Spermatophyta</taxon>
        <taxon>Magnoliopsida</taxon>
        <taxon>eudicotyledons</taxon>
        <taxon>Gunneridae</taxon>
        <taxon>Pentapetalae</taxon>
        <taxon>rosids</taxon>
        <taxon>malvids</taxon>
        <taxon>Brassicales</taxon>
        <taxon>Brassicaceae</taxon>
        <taxon>Camelineae</taxon>
        <taxon>Arabidopsis</taxon>
    </lineage>
</organism>
<dbReference type="EMBL" id="AC009606">
    <property type="protein sequence ID" value="AAF64540.1"/>
    <property type="molecule type" value="Genomic_DNA"/>
</dbReference>
<dbReference type="EMBL" id="CP002686">
    <property type="protein sequence ID" value="AEE74237.1"/>
    <property type="molecule type" value="Genomic_DNA"/>
</dbReference>
<dbReference type="EMBL" id="CP002686">
    <property type="protein sequence ID" value="AEE74238.1"/>
    <property type="molecule type" value="Genomic_DNA"/>
</dbReference>
<dbReference type="EMBL" id="BT006458">
    <property type="protein sequence ID" value="AAP21266.1"/>
    <property type="molecule type" value="mRNA"/>
</dbReference>
<dbReference type="EMBL" id="AK228046">
    <property type="protein sequence ID" value="BAF00008.1"/>
    <property type="molecule type" value="mRNA"/>
</dbReference>
<dbReference type="RefSeq" id="NP_187193.3">
    <molecule id="Q9MA55-1"/>
    <property type="nucleotide sequence ID" value="NM_111415.5"/>
</dbReference>
<dbReference type="RefSeq" id="NP_974227.1">
    <molecule id="Q9MA55-2"/>
    <property type="nucleotide sequence ID" value="NM_202498.2"/>
</dbReference>
<dbReference type="SMR" id="Q9MA55"/>
<dbReference type="BioGRID" id="5042">
    <property type="interactions" value="8"/>
</dbReference>
<dbReference type="FunCoup" id="Q9MA55">
    <property type="interactions" value="3619"/>
</dbReference>
<dbReference type="IntAct" id="Q9MA55">
    <property type="interactions" value="9"/>
</dbReference>
<dbReference type="STRING" id="3702.Q9MA55"/>
<dbReference type="GlyGen" id="Q9MA55">
    <property type="glycosylation" value="1 site"/>
</dbReference>
<dbReference type="iPTMnet" id="Q9MA55"/>
<dbReference type="PaxDb" id="3702-AT3G05420.2"/>
<dbReference type="ProteomicsDB" id="244620">
    <molecule id="Q9MA55-1"/>
</dbReference>
<dbReference type="EnsemblPlants" id="AT3G05420.1">
    <molecule id="Q9MA55-1"/>
    <property type="protein sequence ID" value="AT3G05420.1"/>
    <property type="gene ID" value="AT3G05420"/>
</dbReference>
<dbReference type="EnsemblPlants" id="AT3G05420.2">
    <molecule id="Q9MA55-2"/>
    <property type="protein sequence ID" value="AT3G05420.2"/>
    <property type="gene ID" value="AT3G05420"/>
</dbReference>
<dbReference type="GeneID" id="819707"/>
<dbReference type="Gramene" id="AT3G05420.1">
    <molecule id="Q9MA55-1"/>
    <property type="protein sequence ID" value="AT3G05420.1"/>
    <property type="gene ID" value="AT3G05420"/>
</dbReference>
<dbReference type="Gramene" id="AT3G05420.2">
    <molecule id="Q9MA55-2"/>
    <property type="protein sequence ID" value="AT3G05420.2"/>
    <property type="gene ID" value="AT3G05420"/>
</dbReference>
<dbReference type="KEGG" id="ath:AT3G05420"/>
<dbReference type="Araport" id="AT3G05420"/>
<dbReference type="TAIR" id="AT3G05420">
    <property type="gene designation" value="ACBP4"/>
</dbReference>
<dbReference type="eggNOG" id="KOG0379">
    <property type="taxonomic scope" value="Eukaryota"/>
</dbReference>
<dbReference type="eggNOG" id="KOG0817">
    <property type="taxonomic scope" value="Eukaryota"/>
</dbReference>
<dbReference type="HOGENOM" id="CLU_012752_2_0_1"/>
<dbReference type="InParanoid" id="Q9MA55"/>
<dbReference type="OMA" id="IEHSKWT"/>
<dbReference type="PhylomeDB" id="Q9MA55"/>
<dbReference type="CD-CODE" id="4299E36E">
    <property type="entry name" value="Nucleolus"/>
</dbReference>
<dbReference type="PRO" id="PR:Q9MA55"/>
<dbReference type="Proteomes" id="UP000006548">
    <property type="component" value="Chromosome 3"/>
</dbReference>
<dbReference type="ExpressionAtlas" id="Q9MA55">
    <property type="expression patterns" value="baseline and differential"/>
</dbReference>
<dbReference type="GO" id="GO:0005737">
    <property type="term" value="C:cytoplasm"/>
    <property type="evidence" value="ECO:0000314"/>
    <property type="project" value="UniProtKB"/>
</dbReference>
<dbReference type="GO" id="GO:0005829">
    <property type="term" value="C:cytosol"/>
    <property type="evidence" value="ECO:0000314"/>
    <property type="project" value="TAIR"/>
</dbReference>
<dbReference type="GO" id="GO:0000062">
    <property type="term" value="F:fatty-acyl-CoA binding"/>
    <property type="evidence" value="ECO:0000314"/>
    <property type="project" value="UniProtKB"/>
</dbReference>
<dbReference type="GO" id="GO:0006869">
    <property type="term" value="P:lipid transport"/>
    <property type="evidence" value="ECO:0000314"/>
    <property type="project" value="TAIR"/>
</dbReference>
<dbReference type="GO" id="GO:0009723">
    <property type="term" value="P:response to ethylene"/>
    <property type="evidence" value="ECO:0000270"/>
    <property type="project" value="UniProtKB"/>
</dbReference>
<dbReference type="GO" id="GO:0009753">
    <property type="term" value="P:response to jasmonic acid"/>
    <property type="evidence" value="ECO:0000270"/>
    <property type="project" value="UniProtKB"/>
</dbReference>
<dbReference type="GO" id="GO:0009416">
    <property type="term" value="P:response to light stimulus"/>
    <property type="evidence" value="ECO:0000304"/>
    <property type="project" value="UniProtKB"/>
</dbReference>
<dbReference type="FunFam" id="2.120.10.80:FF:000089">
    <property type="entry name" value="Acyl-CoA-binding domain-containing protein 4"/>
    <property type="match status" value="1"/>
</dbReference>
<dbReference type="FunFam" id="2.120.10.80:FF:000098">
    <property type="entry name" value="Acyl-CoA-binding domain-containing protein 4"/>
    <property type="match status" value="1"/>
</dbReference>
<dbReference type="FunFam" id="1.20.80.10:FF:000024">
    <property type="entry name" value="acyl-CoA-binding domain-containing protein 4 isoform X1"/>
    <property type="match status" value="1"/>
</dbReference>
<dbReference type="Gene3D" id="1.20.80.10">
    <property type="match status" value="1"/>
</dbReference>
<dbReference type="Gene3D" id="2.120.10.80">
    <property type="entry name" value="Kelch-type beta propeller"/>
    <property type="match status" value="2"/>
</dbReference>
<dbReference type="InterPro" id="IPR056819">
    <property type="entry name" value="ACBP4-6_C"/>
</dbReference>
<dbReference type="InterPro" id="IPR000582">
    <property type="entry name" value="Acyl-CoA-binding_protein"/>
</dbReference>
<dbReference type="InterPro" id="IPR035984">
    <property type="entry name" value="Acyl-CoA-binding_sf"/>
</dbReference>
<dbReference type="InterPro" id="IPR014352">
    <property type="entry name" value="FERM/acyl-CoA-bd_prot_sf"/>
</dbReference>
<dbReference type="InterPro" id="IPR015915">
    <property type="entry name" value="Kelch-typ_b-propeller"/>
</dbReference>
<dbReference type="PANTHER" id="PTHR46093:SF3">
    <property type="entry name" value="ACYL-COA-BINDING DOMAIN-CONTAINING PROTEIN 4"/>
    <property type="match status" value="1"/>
</dbReference>
<dbReference type="PANTHER" id="PTHR46093">
    <property type="entry name" value="ACYL-COA-BINDING DOMAIN-CONTAINING PROTEIN 5"/>
    <property type="match status" value="1"/>
</dbReference>
<dbReference type="Pfam" id="PF00887">
    <property type="entry name" value="ACBP"/>
    <property type="match status" value="1"/>
</dbReference>
<dbReference type="Pfam" id="PF24922">
    <property type="entry name" value="ACBP4_C"/>
    <property type="match status" value="1"/>
</dbReference>
<dbReference type="Pfam" id="PF24681">
    <property type="entry name" value="Kelch_KLHDC2_KLHL20_DRC7"/>
    <property type="match status" value="2"/>
</dbReference>
<dbReference type="SUPFAM" id="SSF47027">
    <property type="entry name" value="Acyl-CoA binding protein"/>
    <property type="match status" value="1"/>
</dbReference>
<dbReference type="SUPFAM" id="SSF117281">
    <property type="entry name" value="Kelch motif"/>
    <property type="match status" value="1"/>
</dbReference>
<dbReference type="PROSITE" id="PS51228">
    <property type="entry name" value="ACB_2"/>
    <property type="match status" value="1"/>
</dbReference>
<keyword id="KW-0025">Alternative splicing</keyword>
<keyword id="KW-0175">Coiled coil</keyword>
<keyword id="KW-0963">Cytoplasm</keyword>
<keyword id="KW-0880">Kelch repeat</keyword>
<keyword id="KW-0446">Lipid-binding</keyword>
<keyword id="KW-0597">Phosphoprotein</keyword>
<keyword id="KW-1185">Reference proteome</keyword>
<keyword id="KW-0677">Repeat</keyword>
<keyword id="KW-0813">Transport</keyword>